<protein>
    <recommendedName>
        <fullName evidence="1">Tetraacyldisaccharide 4'-kinase</fullName>
        <ecNumber evidence="1">2.7.1.130</ecNumber>
    </recommendedName>
    <alternativeName>
        <fullName evidence="1">Lipid A 4'-kinase</fullName>
    </alternativeName>
</protein>
<dbReference type="EC" id="2.7.1.130" evidence="1"/>
<dbReference type="EMBL" id="CP000915">
    <property type="protein sequence ID" value="ACD30260.1"/>
    <property type="molecule type" value="Genomic_DNA"/>
</dbReference>
<dbReference type="SMR" id="B2SF15"/>
<dbReference type="KEGG" id="ftm:FTM_0172"/>
<dbReference type="HOGENOM" id="CLU_038816_2_0_6"/>
<dbReference type="UniPathway" id="UPA00359">
    <property type="reaction ID" value="UER00482"/>
</dbReference>
<dbReference type="GO" id="GO:0005886">
    <property type="term" value="C:plasma membrane"/>
    <property type="evidence" value="ECO:0007669"/>
    <property type="project" value="TreeGrafter"/>
</dbReference>
<dbReference type="GO" id="GO:0005524">
    <property type="term" value="F:ATP binding"/>
    <property type="evidence" value="ECO:0007669"/>
    <property type="project" value="UniProtKB-UniRule"/>
</dbReference>
<dbReference type="GO" id="GO:0009029">
    <property type="term" value="F:tetraacyldisaccharide 4'-kinase activity"/>
    <property type="evidence" value="ECO:0007669"/>
    <property type="project" value="UniProtKB-UniRule"/>
</dbReference>
<dbReference type="GO" id="GO:0009245">
    <property type="term" value="P:lipid A biosynthetic process"/>
    <property type="evidence" value="ECO:0007669"/>
    <property type="project" value="UniProtKB-UniRule"/>
</dbReference>
<dbReference type="GO" id="GO:0009244">
    <property type="term" value="P:lipopolysaccharide core region biosynthetic process"/>
    <property type="evidence" value="ECO:0007669"/>
    <property type="project" value="TreeGrafter"/>
</dbReference>
<dbReference type="HAMAP" id="MF_00409">
    <property type="entry name" value="LpxK"/>
    <property type="match status" value="1"/>
</dbReference>
<dbReference type="InterPro" id="IPR003758">
    <property type="entry name" value="LpxK"/>
</dbReference>
<dbReference type="InterPro" id="IPR027417">
    <property type="entry name" value="P-loop_NTPase"/>
</dbReference>
<dbReference type="NCBIfam" id="TIGR00682">
    <property type="entry name" value="lpxK"/>
    <property type="match status" value="1"/>
</dbReference>
<dbReference type="PANTHER" id="PTHR42724">
    <property type="entry name" value="TETRAACYLDISACCHARIDE 4'-KINASE"/>
    <property type="match status" value="1"/>
</dbReference>
<dbReference type="PANTHER" id="PTHR42724:SF1">
    <property type="entry name" value="TETRAACYLDISACCHARIDE 4'-KINASE, MITOCHONDRIAL-RELATED"/>
    <property type="match status" value="1"/>
</dbReference>
<dbReference type="Pfam" id="PF02606">
    <property type="entry name" value="LpxK"/>
    <property type="match status" value="1"/>
</dbReference>
<dbReference type="SUPFAM" id="SSF52540">
    <property type="entry name" value="P-loop containing nucleoside triphosphate hydrolases"/>
    <property type="match status" value="1"/>
</dbReference>
<accession>B2SF15</accession>
<evidence type="ECO:0000255" key="1">
    <source>
        <dbReference type="HAMAP-Rule" id="MF_00409"/>
    </source>
</evidence>
<feature type="chain" id="PRO_1000123718" description="Tetraacyldisaccharide 4'-kinase">
    <location>
        <begin position="1"/>
        <end position="322"/>
    </location>
</feature>
<feature type="binding site" evidence="1">
    <location>
        <begin position="54"/>
        <end position="61"/>
    </location>
    <ligand>
        <name>ATP</name>
        <dbReference type="ChEBI" id="CHEBI:30616"/>
    </ligand>
</feature>
<name>LPXK_FRATM</name>
<proteinExistence type="inferred from homology"/>
<sequence length="322" mass="36193">MLDKIWYRSKPNLLSRVLQPISLVFIDIANKRKIKQQLKQYKSKIPIIVVGNISVGGTGKTPVVRMLAQQYLAQDKKPAIISRGYGAKADNYPFEVTSGTLATQCGDEPAMLFDALQAQVPIVIAPERVQAVKYIEKNFPDTDIIMSDDGLQHYKLARDKEIVVVDAIRMFGNKLCLPAGPLREPIERLKEVDQIIVIGNCSDKDKELLKNYKNVTYAKVVATEFVNILTAKKVAKTEFNHQNAIAIAGIGNPTKFFKTLEESAINITAKKVFKDHHKFTQSDFEGIDSDITVVMTYKDAIKCKNFAKANWWYLDIALDINV</sequence>
<gene>
    <name evidence="1" type="primary">lpxK</name>
    <name type="ordered locus">FTM_0172</name>
</gene>
<keyword id="KW-0067">ATP-binding</keyword>
<keyword id="KW-0418">Kinase</keyword>
<keyword id="KW-0441">Lipid A biosynthesis</keyword>
<keyword id="KW-0444">Lipid biosynthesis</keyword>
<keyword id="KW-0443">Lipid metabolism</keyword>
<keyword id="KW-0547">Nucleotide-binding</keyword>
<keyword id="KW-0808">Transferase</keyword>
<comment type="function">
    <text evidence="1">Transfers the gamma-phosphate of ATP to the 4'-position of a tetraacyldisaccharide 1-phosphate intermediate (termed DS-1-P) to form tetraacyldisaccharide 1,4'-bis-phosphate (lipid IVA).</text>
</comment>
<comment type="catalytic activity">
    <reaction evidence="1">
        <text>a lipid A disaccharide + ATP = a lipid IVA + ADP + H(+)</text>
        <dbReference type="Rhea" id="RHEA:67840"/>
        <dbReference type="ChEBI" id="CHEBI:15378"/>
        <dbReference type="ChEBI" id="CHEBI:30616"/>
        <dbReference type="ChEBI" id="CHEBI:176343"/>
        <dbReference type="ChEBI" id="CHEBI:176425"/>
        <dbReference type="ChEBI" id="CHEBI:456216"/>
        <dbReference type="EC" id="2.7.1.130"/>
    </reaction>
</comment>
<comment type="pathway">
    <text evidence="1">Glycolipid biosynthesis; lipid IV(A) biosynthesis; lipid IV(A) from (3R)-3-hydroxytetradecanoyl-[acyl-carrier-protein] and UDP-N-acetyl-alpha-D-glucosamine: step 6/6.</text>
</comment>
<comment type="similarity">
    <text evidence="1">Belongs to the LpxK family.</text>
</comment>
<organism>
    <name type="scientific">Francisella tularensis subsp. mediasiatica (strain FSC147)</name>
    <dbReference type="NCBI Taxonomy" id="441952"/>
    <lineage>
        <taxon>Bacteria</taxon>
        <taxon>Pseudomonadati</taxon>
        <taxon>Pseudomonadota</taxon>
        <taxon>Gammaproteobacteria</taxon>
        <taxon>Thiotrichales</taxon>
        <taxon>Francisellaceae</taxon>
        <taxon>Francisella</taxon>
    </lineage>
</organism>
<reference key="1">
    <citation type="journal article" date="2009" name="PLoS Pathog.">
        <title>Molecular evolutionary consequences of niche restriction in Francisella tularensis, a facultative intracellular pathogen.</title>
        <authorList>
            <person name="Larsson P."/>
            <person name="Elfsmark D."/>
            <person name="Svensson K."/>
            <person name="Wikstroem P."/>
            <person name="Forsman M."/>
            <person name="Brettin T."/>
            <person name="Keim P."/>
            <person name="Johansson A."/>
        </authorList>
    </citation>
    <scope>NUCLEOTIDE SEQUENCE [LARGE SCALE GENOMIC DNA]</scope>
    <source>
        <strain>FSC147</strain>
    </source>
</reference>